<evidence type="ECO:0000255" key="1">
    <source>
        <dbReference type="HAMAP-Rule" id="MF_00688"/>
    </source>
</evidence>
<organism>
    <name type="scientific">Leptospira borgpetersenii serovar Hardjo-bovis (strain L550)</name>
    <dbReference type="NCBI Taxonomy" id="355276"/>
    <lineage>
        <taxon>Bacteria</taxon>
        <taxon>Pseudomonadati</taxon>
        <taxon>Spirochaetota</taxon>
        <taxon>Spirochaetia</taxon>
        <taxon>Leptospirales</taxon>
        <taxon>Leptospiraceae</taxon>
        <taxon>Leptospira</taxon>
    </lineage>
</organism>
<dbReference type="EC" id="2.3.2.6" evidence="1"/>
<dbReference type="EMBL" id="CP000348">
    <property type="protein sequence ID" value="ABJ77680.1"/>
    <property type="molecule type" value="Genomic_DNA"/>
</dbReference>
<dbReference type="RefSeq" id="WP_002732728.1">
    <property type="nucleotide sequence ID" value="NC_008508.1"/>
</dbReference>
<dbReference type="SMR" id="Q056R5"/>
<dbReference type="GeneID" id="61172287"/>
<dbReference type="KEGG" id="lbl:LBL_0048"/>
<dbReference type="HOGENOM" id="CLU_075045_0_1_12"/>
<dbReference type="GO" id="GO:0005737">
    <property type="term" value="C:cytoplasm"/>
    <property type="evidence" value="ECO:0007669"/>
    <property type="project" value="UniProtKB-SubCell"/>
</dbReference>
<dbReference type="GO" id="GO:0008914">
    <property type="term" value="F:leucyl-tRNA--protein transferase activity"/>
    <property type="evidence" value="ECO:0007669"/>
    <property type="project" value="UniProtKB-UniRule"/>
</dbReference>
<dbReference type="GO" id="GO:0030163">
    <property type="term" value="P:protein catabolic process"/>
    <property type="evidence" value="ECO:0007669"/>
    <property type="project" value="UniProtKB-UniRule"/>
</dbReference>
<dbReference type="FunFam" id="3.40.630.70:FF:000001">
    <property type="entry name" value="Leucyl/phenylalanyl-tRNA--protein transferase"/>
    <property type="match status" value="1"/>
</dbReference>
<dbReference type="Gene3D" id="3.40.630.70">
    <property type="entry name" value="Leucyl/phenylalanyl-tRNA-protein transferase, C-terminal domain"/>
    <property type="match status" value="1"/>
</dbReference>
<dbReference type="Gene3D" id="3.30.70.3550">
    <property type="entry name" value="Leucyl/phenylalanyl-tRNA-protein transferase, N-terminal domain"/>
    <property type="match status" value="1"/>
</dbReference>
<dbReference type="HAMAP" id="MF_00688">
    <property type="entry name" value="Leu_Phe_trans"/>
    <property type="match status" value="1"/>
</dbReference>
<dbReference type="InterPro" id="IPR016181">
    <property type="entry name" value="Acyl_CoA_acyltransferase"/>
</dbReference>
<dbReference type="InterPro" id="IPR004616">
    <property type="entry name" value="Leu/Phe-tRNA_Trfase"/>
</dbReference>
<dbReference type="InterPro" id="IPR042203">
    <property type="entry name" value="Leu/Phe-tRNA_Trfase_C"/>
</dbReference>
<dbReference type="InterPro" id="IPR042221">
    <property type="entry name" value="Leu/Phe-tRNA_Trfase_N"/>
</dbReference>
<dbReference type="NCBIfam" id="TIGR00667">
    <property type="entry name" value="aat"/>
    <property type="match status" value="1"/>
</dbReference>
<dbReference type="PANTHER" id="PTHR30098">
    <property type="entry name" value="LEUCYL/PHENYLALANYL-TRNA--PROTEIN TRANSFERASE"/>
    <property type="match status" value="1"/>
</dbReference>
<dbReference type="PANTHER" id="PTHR30098:SF2">
    <property type="entry name" value="LEUCYL_PHENYLALANYL-TRNA--PROTEIN TRANSFERASE"/>
    <property type="match status" value="1"/>
</dbReference>
<dbReference type="Pfam" id="PF03588">
    <property type="entry name" value="Leu_Phe_trans"/>
    <property type="match status" value="1"/>
</dbReference>
<dbReference type="SUPFAM" id="SSF55729">
    <property type="entry name" value="Acyl-CoA N-acyltransferases (Nat)"/>
    <property type="match status" value="1"/>
</dbReference>
<reference key="1">
    <citation type="journal article" date="2006" name="Proc. Natl. Acad. Sci. U.S.A.">
        <title>Genome reduction in Leptospira borgpetersenii reflects limited transmission potential.</title>
        <authorList>
            <person name="Bulach D.M."/>
            <person name="Zuerner R.L."/>
            <person name="Wilson P."/>
            <person name="Seemann T."/>
            <person name="McGrath A."/>
            <person name="Cullen P.A."/>
            <person name="Davis J."/>
            <person name="Johnson M."/>
            <person name="Kuczek E."/>
            <person name="Alt D.P."/>
            <person name="Peterson-Burch B."/>
            <person name="Coppel R.L."/>
            <person name="Rood J.I."/>
            <person name="Davies J.K."/>
            <person name="Adler B."/>
        </authorList>
    </citation>
    <scope>NUCLEOTIDE SEQUENCE [LARGE SCALE GENOMIC DNA]</scope>
    <source>
        <strain>L550</strain>
    </source>
</reference>
<proteinExistence type="inferred from homology"/>
<feature type="chain" id="PRO_0000304340" description="Leucyl/phenylalanyl-tRNA--protein transferase">
    <location>
        <begin position="1"/>
        <end position="219"/>
    </location>
</feature>
<accession>Q056R5</accession>
<name>LFTR_LEPBL</name>
<keyword id="KW-0012">Acyltransferase</keyword>
<keyword id="KW-0963">Cytoplasm</keyword>
<keyword id="KW-0808">Transferase</keyword>
<sequence>MKDFSDFFRNPHIWDREIVAVGGDLSPERLLYAYKNGIFPWSDQPILWYCLDPRGIFDLNKLHISKRLKRKINQKRYTITFNRAFEQVMRCCAYRPGEETWITDLFIKSYTEFHKLGYAHSIEVWDENGNLGGGVYGVAIGNFFAGESMFSFISDFGKIGLFHLFEALKKDQFTLFDTQQLNIVTLCLGAYQIPKKEYLRRLESAVASGKKWNPLRTVF</sequence>
<gene>
    <name evidence="1" type="primary">aat</name>
    <name type="ordered locus">LBL_0048</name>
</gene>
<protein>
    <recommendedName>
        <fullName evidence="1">Leucyl/phenylalanyl-tRNA--protein transferase</fullName>
        <ecNumber evidence="1">2.3.2.6</ecNumber>
    </recommendedName>
    <alternativeName>
        <fullName evidence="1">L/F-transferase</fullName>
    </alternativeName>
    <alternativeName>
        <fullName evidence="1">Leucyltransferase</fullName>
    </alternativeName>
    <alternativeName>
        <fullName evidence="1">Phenyalanyltransferase</fullName>
    </alternativeName>
</protein>
<comment type="function">
    <text evidence="1">Functions in the N-end rule pathway of protein degradation where it conjugates Leu, Phe and, less efficiently, Met from aminoacyl-tRNAs to the N-termini of proteins containing an N-terminal arginine or lysine.</text>
</comment>
<comment type="catalytic activity">
    <reaction evidence="1">
        <text>N-terminal L-lysyl-[protein] + L-leucyl-tRNA(Leu) = N-terminal L-leucyl-L-lysyl-[protein] + tRNA(Leu) + H(+)</text>
        <dbReference type="Rhea" id="RHEA:12340"/>
        <dbReference type="Rhea" id="RHEA-COMP:9613"/>
        <dbReference type="Rhea" id="RHEA-COMP:9622"/>
        <dbReference type="Rhea" id="RHEA-COMP:12670"/>
        <dbReference type="Rhea" id="RHEA-COMP:12671"/>
        <dbReference type="ChEBI" id="CHEBI:15378"/>
        <dbReference type="ChEBI" id="CHEBI:65249"/>
        <dbReference type="ChEBI" id="CHEBI:78442"/>
        <dbReference type="ChEBI" id="CHEBI:78494"/>
        <dbReference type="ChEBI" id="CHEBI:133043"/>
        <dbReference type="EC" id="2.3.2.6"/>
    </reaction>
</comment>
<comment type="catalytic activity">
    <reaction evidence="1">
        <text>N-terminal L-arginyl-[protein] + L-leucyl-tRNA(Leu) = N-terminal L-leucyl-L-arginyl-[protein] + tRNA(Leu) + H(+)</text>
        <dbReference type="Rhea" id="RHEA:50416"/>
        <dbReference type="Rhea" id="RHEA-COMP:9613"/>
        <dbReference type="Rhea" id="RHEA-COMP:9622"/>
        <dbReference type="Rhea" id="RHEA-COMP:12672"/>
        <dbReference type="Rhea" id="RHEA-COMP:12673"/>
        <dbReference type="ChEBI" id="CHEBI:15378"/>
        <dbReference type="ChEBI" id="CHEBI:64719"/>
        <dbReference type="ChEBI" id="CHEBI:78442"/>
        <dbReference type="ChEBI" id="CHEBI:78494"/>
        <dbReference type="ChEBI" id="CHEBI:133044"/>
        <dbReference type="EC" id="2.3.2.6"/>
    </reaction>
</comment>
<comment type="catalytic activity">
    <reaction evidence="1">
        <text>L-phenylalanyl-tRNA(Phe) + an N-terminal L-alpha-aminoacyl-[protein] = an N-terminal L-phenylalanyl-L-alpha-aminoacyl-[protein] + tRNA(Phe)</text>
        <dbReference type="Rhea" id="RHEA:43632"/>
        <dbReference type="Rhea" id="RHEA-COMP:9668"/>
        <dbReference type="Rhea" id="RHEA-COMP:9699"/>
        <dbReference type="Rhea" id="RHEA-COMP:10636"/>
        <dbReference type="Rhea" id="RHEA-COMP:10637"/>
        <dbReference type="ChEBI" id="CHEBI:78442"/>
        <dbReference type="ChEBI" id="CHEBI:78531"/>
        <dbReference type="ChEBI" id="CHEBI:78597"/>
        <dbReference type="ChEBI" id="CHEBI:83561"/>
        <dbReference type="EC" id="2.3.2.6"/>
    </reaction>
</comment>
<comment type="subcellular location">
    <subcellularLocation>
        <location evidence="1">Cytoplasm</location>
    </subcellularLocation>
</comment>
<comment type="similarity">
    <text evidence="1">Belongs to the L/F-transferase family.</text>
</comment>